<evidence type="ECO:0000255" key="1">
    <source>
        <dbReference type="HAMAP-Rule" id="MF_00636"/>
    </source>
</evidence>
<evidence type="ECO:0000256" key="2">
    <source>
        <dbReference type="SAM" id="MobiDB-lite"/>
    </source>
</evidence>
<reference key="1">
    <citation type="journal article" date="2002" name="Nature">
        <title>Genome sequence of the plant pathogen Ralstonia solanacearum.</title>
        <authorList>
            <person name="Salanoubat M."/>
            <person name="Genin S."/>
            <person name="Artiguenave F."/>
            <person name="Gouzy J."/>
            <person name="Mangenot S."/>
            <person name="Arlat M."/>
            <person name="Billault A."/>
            <person name="Brottier P."/>
            <person name="Camus J.-C."/>
            <person name="Cattolico L."/>
            <person name="Chandler M."/>
            <person name="Choisne N."/>
            <person name="Claudel-Renard C."/>
            <person name="Cunnac S."/>
            <person name="Demange N."/>
            <person name="Gaspin C."/>
            <person name="Lavie M."/>
            <person name="Moisan A."/>
            <person name="Robert C."/>
            <person name="Saurin W."/>
            <person name="Schiex T."/>
            <person name="Siguier P."/>
            <person name="Thebault P."/>
            <person name="Whalen M."/>
            <person name="Wincker P."/>
            <person name="Levy M."/>
            <person name="Weissenbach J."/>
            <person name="Boucher C.A."/>
        </authorList>
    </citation>
    <scope>NUCLEOTIDE SEQUENCE [LARGE SCALE GENOMIC DNA]</scope>
    <source>
        <strain>ATCC BAA-1114 / GMI1000</strain>
    </source>
</reference>
<gene>
    <name type="ordered locus">RSc0403</name>
    <name type="ORF">RS03371</name>
</gene>
<name>Y403_RALN1</name>
<feature type="chain" id="PRO_0000107749" description="Nucleotide-binding protein RSc0403">
    <location>
        <begin position="1"/>
        <end position="296"/>
    </location>
</feature>
<feature type="region of interest" description="Disordered" evidence="2">
    <location>
        <begin position="99"/>
        <end position="124"/>
    </location>
</feature>
<feature type="binding site" evidence="1">
    <location>
        <begin position="8"/>
        <end position="15"/>
    </location>
    <ligand>
        <name>ATP</name>
        <dbReference type="ChEBI" id="CHEBI:30616"/>
    </ligand>
</feature>
<feature type="binding site" evidence="1">
    <location>
        <begin position="57"/>
        <end position="60"/>
    </location>
    <ligand>
        <name>GTP</name>
        <dbReference type="ChEBI" id="CHEBI:37565"/>
    </ligand>
</feature>
<keyword id="KW-0067">ATP-binding</keyword>
<keyword id="KW-0342">GTP-binding</keyword>
<keyword id="KW-0547">Nucleotide-binding</keyword>
<keyword id="KW-1185">Reference proteome</keyword>
<sequence>MRIILITGMSGSGKSVALNVLEDAGYYCVDNLPAQFIPELARYLADQGYTHLGVATDIRSRESLRKVPETITQLRKEHDVRMLFLTASTNALVQRYSETRRRHPLSIRNGRPDAGNPPSAAKGPDTSLIEAIEMERELLSPLADPAHRIDTSTLRTNALRAYIKEFISDEPHDITLMFESFGFKHGVPTDADLVFDVRSLPNPYYDTQLRPLTGRDQPVIDFLQSQPMVLAMAEDIRAYVEKWLPSFIADNRSYLTVAIGCTGGQHRSVYIAERLATYFRAHGNVLVRHRELAVDA</sequence>
<proteinExistence type="inferred from homology"/>
<protein>
    <recommendedName>
        <fullName evidence="1">Nucleotide-binding protein RSc0403</fullName>
    </recommendedName>
</protein>
<dbReference type="EMBL" id="AL646052">
    <property type="protein sequence ID" value="CAD13931.1"/>
    <property type="molecule type" value="Genomic_DNA"/>
</dbReference>
<dbReference type="SMR" id="Q8Y2D3"/>
<dbReference type="STRING" id="267608.RSc0403"/>
<dbReference type="EnsemblBacteria" id="CAD13931">
    <property type="protein sequence ID" value="CAD13931"/>
    <property type="gene ID" value="RSc0403"/>
</dbReference>
<dbReference type="KEGG" id="rso:RSc0403"/>
<dbReference type="eggNOG" id="COG1660">
    <property type="taxonomic scope" value="Bacteria"/>
</dbReference>
<dbReference type="HOGENOM" id="CLU_059558_1_1_4"/>
<dbReference type="Proteomes" id="UP000001436">
    <property type="component" value="Chromosome"/>
</dbReference>
<dbReference type="GO" id="GO:0005524">
    <property type="term" value="F:ATP binding"/>
    <property type="evidence" value="ECO:0007669"/>
    <property type="project" value="UniProtKB-UniRule"/>
</dbReference>
<dbReference type="GO" id="GO:0005525">
    <property type="term" value="F:GTP binding"/>
    <property type="evidence" value="ECO:0007669"/>
    <property type="project" value="UniProtKB-UniRule"/>
</dbReference>
<dbReference type="HAMAP" id="MF_00636">
    <property type="entry name" value="RapZ_like"/>
    <property type="match status" value="1"/>
</dbReference>
<dbReference type="InterPro" id="IPR027417">
    <property type="entry name" value="P-loop_NTPase"/>
</dbReference>
<dbReference type="InterPro" id="IPR005337">
    <property type="entry name" value="RapZ-like"/>
</dbReference>
<dbReference type="InterPro" id="IPR053930">
    <property type="entry name" value="RapZ-like_N"/>
</dbReference>
<dbReference type="InterPro" id="IPR053931">
    <property type="entry name" value="RapZ_C"/>
</dbReference>
<dbReference type="NCBIfam" id="NF003828">
    <property type="entry name" value="PRK05416.1"/>
    <property type="match status" value="1"/>
</dbReference>
<dbReference type="PANTHER" id="PTHR30448">
    <property type="entry name" value="RNASE ADAPTER PROTEIN RAPZ"/>
    <property type="match status" value="1"/>
</dbReference>
<dbReference type="PANTHER" id="PTHR30448:SF0">
    <property type="entry name" value="RNASE ADAPTER PROTEIN RAPZ"/>
    <property type="match status" value="1"/>
</dbReference>
<dbReference type="Pfam" id="PF22740">
    <property type="entry name" value="PapZ_C"/>
    <property type="match status" value="1"/>
</dbReference>
<dbReference type="Pfam" id="PF03668">
    <property type="entry name" value="RapZ-like_N"/>
    <property type="match status" value="1"/>
</dbReference>
<dbReference type="PIRSF" id="PIRSF005052">
    <property type="entry name" value="P-loopkin"/>
    <property type="match status" value="1"/>
</dbReference>
<dbReference type="SUPFAM" id="SSF52540">
    <property type="entry name" value="P-loop containing nucleoside triphosphate hydrolases"/>
    <property type="match status" value="1"/>
</dbReference>
<comment type="function">
    <text evidence="1">Displays ATPase and GTPase activities.</text>
</comment>
<comment type="similarity">
    <text evidence="1">Belongs to the RapZ-like family.</text>
</comment>
<accession>Q8Y2D3</accession>
<organism>
    <name type="scientific">Ralstonia nicotianae (strain ATCC BAA-1114 / GMI1000)</name>
    <name type="common">Ralstonia solanacearum</name>
    <dbReference type="NCBI Taxonomy" id="267608"/>
    <lineage>
        <taxon>Bacteria</taxon>
        <taxon>Pseudomonadati</taxon>
        <taxon>Pseudomonadota</taxon>
        <taxon>Betaproteobacteria</taxon>
        <taxon>Burkholderiales</taxon>
        <taxon>Burkholderiaceae</taxon>
        <taxon>Ralstonia</taxon>
        <taxon>Ralstonia solanacearum species complex</taxon>
    </lineage>
</organism>